<dbReference type="EMBL" id="KX987127">
    <property type="protein sequence ID" value="API81889.1"/>
    <property type="molecule type" value="Genomic_DNA"/>
</dbReference>
<dbReference type="PDB" id="6IBG">
    <property type="method" value="X-ray"/>
    <property type="resolution" value="1.95 A"/>
    <property type="chains" value="A/B/C=1-438"/>
</dbReference>
<dbReference type="PDBsum" id="6IBG"/>
<dbReference type="SMR" id="A0A1L4BKQ4"/>
<dbReference type="Proteomes" id="UP000223104">
    <property type="component" value="Genome"/>
</dbReference>
<dbReference type="GO" id="GO:0019028">
    <property type="term" value="C:viral capsid"/>
    <property type="evidence" value="ECO:0007669"/>
    <property type="project" value="UniProtKB-KW"/>
</dbReference>
<dbReference type="InterPro" id="IPR054117">
    <property type="entry name" value="P23-45_portal"/>
</dbReference>
<dbReference type="Pfam" id="PF21919">
    <property type="entry name" value="P23-45_portal_barrel"/>
    <property type="match status" value="1"/>
</dbReference>
<feature type="chain" id="PRO_0000447193" description="Portal protein">
    <location>
        <begin position="1"/>
        <end position="448"/>
    </location>
</feature>
<feature type="region of interest" description="Disordered" evidence="2">
    <location>
        <begin position="1"/>
        <end position="25"/>
    </location>
</feature>
<feature type="helix" evidence="9">
    <location>
        <begin position="48"/>
        <end position="50"/>
    </location>
</feature>
<feature type="helix" evidence="9">
    <location>
        <begin position="52"/>
        <end position="62"/>
    </location>
</feature>
<feature type="helix" evidence="9">
    <location>
        <begin position="66"/>
        <end position="80"/>
    </location>
</feature>
<feature type="strand" evidence="9">
    <location>
        <begin position="85"/>
        <end position="87"/>
    </location>
</feature>
<feature type="strand" evidence="9">
    <location>
        <begin position="89"/>
        <end position="92"/>
    </location>
</feature>
<feature type="helix" evidence="9">
    <location>
        <begin position="93"/>
        <end position="106"/>
    </location>
</feature>
<feature type="helix" evidence="9">
    <location>
        <begin position="116"/>
        <end position="131"/>
    </location>
</feature>
<feature type="strand" evidence="9">
    <location>
        <begin position="132"/>
        <end position="142"/>
    </location>
</feature>
<feature type="strand" evidence="9">
    <location>
        <begin position="148"/>
        <end position="156"/>
    </location>
</feature>
<feature type="helix" evidence="9">
    <location>
        <begin position="158"/>
        <end position="160"/>
    </location>
</feature>
<feature type="strand" evidence="9">
    <location>
        <begin position="161"/>
        <end position="166"/>
    </location>
</feature>
<feature type="strand" evidence="9">
    <location>
        <begin position="172"/>
        <end position="180"/>
    </location>
</feature>
<feature type="strand" evidence="9">
    <location>
        <begin position="187"/>
        <end position="194"/>
    </location>
</feature>
<feature type="helix" evidence="9">
    <location>
        <begin position="195"/>
        <end position="197"/>
    </location>
</feature>
<feature type="strand" evidence="9">
    <location>
        <begin position="198"/>
        <end position="204"/>
    </location>
</feature>
<feature type="strand" evidence="9">
    <location>
        <begin position="207"/>
        <end position="209"/>
    </location>
</feature>
<feature type="helix" evidence="9">
    <location>
        <begin position="216"/>
        <end position="218"/>
    </location>
</feature>
<feature type="helix" evidence="9">
    <location>
        <begin position="219"/>
        <end position="241"/>
    </location>
</feature>
<feature type="strand" evidence="9">
    <location>
        <begin position="244"/>
        <end position="248"/>
    </location>
</feature>
<feature type="helix" evidence="9">
    <location>
        <begin position="257"/>
        <end position="271"/>
    </location>
</feature>
<feature type="helix" evidence="9">
    <location>
        <begin position="273"/>
        <end position="275"/>
    </location>
</feature>
<feature type="strand" evidence="9">
    <location>
        <begin position="284"/>
        <end position="287"/>
    </location>
</feature>
<feature type="helix" evidence="9">
    <location>
        <begin position="298"/>
        <end position="310"/>
    </location>
</feature>
<feature type="turn" evidence="9">
    <location>
        <begin position="311"/>
        <end position="313"/>
    </location>
</feature>
<feature type="turn" evidence="9">
    <location>
        <begin position="318"/>
        <end position="322"/>
    </location>
</feature>
<feature type="strand" evidence="9">
    <location>
        <begin position="324"/>
        <end position="326"/>
    </location>
</feature>
<feature type="helix" evidence="9">
    <location>
        <begin position="330"/>
        <end position="355"/>
    </location>
</feature>
<feature type="helix" evidence="9">
    <location>
        <begin position="357"/>
        <end position="361"/>
    </location>
</feature>
<feature type="turn" evidence="9">
    <location>
        <begin position="362"/>
        <end position="364"/>
    </location>
</feature>
<feature type="strand" evidence="9">
    <location>
        <begin position="373"/>
        <end position="375"/>
    </location>
</feature>
<feature type="helix" evidence="9">
    <location>
        <begin position="384"/>
        <end position="397"/>
    </location>
</feature>
<feature type="turn" evidence="9">
    <location>
        <begin position="398"/>
        <end position="400"/>
    </location>
</feature>
<feature type="helix" evidence="9">
    <location>
        <begin position="404"/>
        <end position="413"/>
    </location>
</feature>
<feature type="helix" evidence="9">
    <location>
        <begin position="417"/>
        <end position="423"/>
    </location>
</feature>
<feature type="helix" evidence="9">
    <location>
        <begin position="428"/>
        <end position="433"/>
    </location>
</feature>
<evidence type="ECO:0000250" key="1">
    <source>
        <dbReference type="UniProtKB" id="P26744"/>
    </source>
</evidence>
<evidence type="ECO:0000256" key="2">
    <source>
        <dbReference type="SAM" id="MobiDB-lite"/>
    </source>
</evidence>
<evidence type="ECO:0000269" key="3">
    <source>
    </source>
</evidence>
<evidence type="ECO:0000269" key="4">
    <source>
    </source>
</evidence>
<evidence type="ECO:0000303" key="5">
    <source>
    </source>
</evidence>
<evidence type="ECO:0000305" key="6"/>
<evidence type="ECO:0000305" key="7">
    <source>
    </source>
</evidence>
<evidence type="ECO:0000312" key="8">
    <source>
        <dbReference type="EMBL" id="API81889.1"/>
    </source>
</evidence>
<evidence type="ECO:0007829" key="9">
    <source>
        <dbReference type="PDB" id="6IBG"/>
    </source>
</evidence>
<proteinExistence type="evidence at protein level"/>
<protein>
    <recommendedName>
        <fullName evidence="5">Portal protein</fullName>
    </recommendedName>
    <alternativeName>
        <fullName evidence="6">Gene product 81</fullName>
        <shortName evidence="6">gp81</shortName>
    </alternativeName>
</protein>
<comment type="function">
    <text evidence="4">Forms the portal vertex of the capsid (PubMed:30737287). This portal plays critical roles in head assembly, genome packaging, neck/tail attachment, and genome ejection (PubMed:30737287). The portal protein multimerizes as a single ring-shaped homododecamer arranged around a central channel (PubMed:30737287). Forms the portal vertex of the capsid. This portal plays critical roles in head assembly, genome packaging, neck/tail attachment, and genome ejection (PubMed:30737287).</text>
</comment>
<comment type="subunit">
    <text evidence="1 3 4 7">Homododecamer (PubMed:24192358, PubMed:30737287). Interacts with the capsid protein (Probable). Interacts with the terminase large subunit; this interaction allows the packaging of viral DNA (By similarity).</text>
</comment>
<comment type="subcellular location">
    <subcellularLocation>
        <location evidence="4">Virion</location>
    </subcellularLocation>
    <text evidence="4">Located at a unique vertex of the capsid.</text>
</comment>
<comment type="similarity">
    <text evidence="6">Belongs to the P23virus portal protein family.</text>
</comment>
<name>PORTL_BPG20</name>
<sequence length="448" mass="49671">MAKRGRKPKELVPGPGSIDPSDVPKLEGASVPVMSTSYDVVVDREFDELLQGKDGLLVYHKMLSDGTVKNALNYIFGRIRSAKWYVEPASTDPEDIAIAAFIHAQLGIDDASVGKYPFGRLFAIYENAYIYGMAAGEIVLTLGADGKLILDKIVPIHPFNIDEVLYDEEGGPKALKLSGEVKGGSQFVSGLEIPIWKTVVFLHNDDGSFTGQSALRAAVPHWLAKRALILLINHGLERFMIGVPTLTIPKSVRQGTKQWEAAKEIVKNFVQKPRHGIILPDDWKFDTVDLKSAMPDAIPYLTYHDAGIARALGIDFNTVQLNMGVQAINIGEFVSLTQQTIISLQREFASAVNLYLIPKLVLPNWPSATRFPRLTFEMEERNDFSAAANLMGMLINAVKDSEDIPTELKALIDALPSKMRRALGVVDEVREAVRQPADSRYLYTRRRR</sequence>
<accession>A0A1L4BKQ4</accession>
<organismHost>
    <name type="scientific">Thermus thermophilus</name>
    <dbReference type="NCBI Taxonomy" id="274"/>
</organismHost>
<keyword id="KW-0002">3D-structure</keyword>
<keyword id="KW-0167">Capsid protein</keyword>
<keyword id="KW-0118">Viral capsid assembly</keyword>
<keyword id="KW-0231">Viral genome packaging</keyword>
<keyword id="KW-1188">Viral release from host cell</keyword>
<keyword id="KW-0946">Virion</keyword>
<organism>
    <name type="scientific">Thermus phage G20c</name>
    <name type="common">Thermus thermophilus phage G20c</name>
    <dbReference type="NCBI Taxonomy" id="1406341"/>
    <lineage>
        <taxon>Viruses</taxon>
        <taxon>Duplodnaviria</taxon>
        <taxon>Heunggongvirae</taxon>
        <taxon>Uroviricota</taxon>
        <taxon>Caudoviricetes</taxon>
        <taxon>Oshimavirus</taxon>
    </lineage>
</organism>
<reference key="1">
    <citation type="journal article" date="2017" name="Nucleic Acids Res.">
        <title>Viral genome packaging terminase cleaves DNA using the canonical RuvC-like two-metal catalysis mechanism.</title>
        <authorList>
            <person name="Xu R.G."/>
            <person name="Jenkins H.T."/>
            <person name="Chechik M."/>
            <person name="Blagova E.V."/>
            <person name="Lopatina A."/>
            <person name="Klimuk E."/>
            <person name="Minakhin L."/>
            <person name="Severinov K."/>
            <person name="Greive S.J."/>
            <person name="Antson A.A."/>
        </authorList>
    </citation>
    <scope>NUCLEOTIDE SEQUENCE [LARGE SCALE GENOMIC DNA]</scope>
</reference>
<reference key="2">
    <citation type="journal article" date="2013" name="Acta Crystallogr. F">
        <title>12-Fold symmetry of the putative portal protein from the Thermus thermophilus bacteriophage G20C determined by X-ray analysis.</title>
        <authorList>
            <person name="Williams L.S."/>
            <person name="Levdikov V.M."/>
            <person name="Minakhin L."/>
            <person name="Severinov K."/>
            <person name="Antson A.A."/>
        </authorList>
    </citation>
    <scope>STRUCTURE BY ELECTRON MICROSCOPY (2.10 ANGSTROMS) OF 21-425</scope>
    <scope>SUBUNIT</scope>
</reference>
<reference key="3">
    <citation type="journal article" date="2019" name="Proc. Natl. Acad. Sci. U.S.A.">
        <title>Cryo-EM structure and in vitro DNA packaging of a thermophilic virus with supersized T=7 capsids.</title>
        <authorList>
            <person name="Bayfield O.W."/>
            <person name="Klimuk E."/>
            <person name="Winkler D.C."/>
            <person name="Hesketh E.L."/>
            <person name="Chechik M."/>
            <person name="Cheng N."/>
            <person name="Dykeman E.C."/>
            <person name="Minakhin L."/>
            <person name="Ranson N.A."/>
            <person name="Severinov K."/>
            <person name="Steven A.C."/>
            <person name="Antson A.A."/>
        </authorList>
    </citation>
    <scope>STRUCTURE BY ELECTRON MICROSCOPY (1.95 ANGSTROMS) OF 1-438</scope>
    <scope>SUBUNIT</scope>
    <scope>INTERACTION WITH THE CAPSID PROTEIN</scope>
    <scope>FUNCTION</scope>
    <scope>SUBCELLULAR LOCATION</scope>
</reference>
<gene>
    <name evidence="8" type="ORF">G20c_81</name>
</gene>